<name>ATPL_STAA8</name>
<accession>Q2G2F6</accession>
<proteinExistence type="inferred from homology"/>
<reference key="1">
    <citation type="book" date="2006" name="Gram positive pathogens, 2nd edition">
        <title>The Staphylococcus aureus NCTC 8325 genome.</title>
        <editorList>
            <person name="Fischetti V."/>
            <person name="Novick R."/>
            <person name="Ferretti J."/>
            <person name="Portnoy D."/>
            <person name="Rood J."/>
        </editorList>
        <authorList>
            <person name="Gillaspy A.F."/>
            <person name="Worrell V."/>
            <person name="Orvis J."/>
            <person name="Roe B.A."/>
            <person name="Dyer D.W."/>
            <person name="Iandolo J.J."/>
        </authorList>
    </citation>
    <scope>NUCLEOTIDE SEQUENCE [LARGE SCALE GENOMIC DNA]</scope>
    <source>
        <strain>NCTC 8325 / PS 47</strain>
    </source>
</reference>
<evidence type="ECO:0000255" key="1">
    <source>
        <dbReference type="HAMAP-Rule" id="MF_01396"/>
    </source>
</evidence>
<gene>
    <name evidence="1" type="primary">atpE</name>
    <name type="ordered locus">SAOUHSC_02349</name>
</gene>
<organism>
    <name type="scientific">Staphylococcus aureus (strain NCTC 8325 / PS 47)</name>
    <dbReference type="NCBI Taxonomy" id="93061"/>
    <lineage>
        <taxon>Bacteria</taxon>
        <taxon>Bacillati</taxon>
        <taxon>Bacillota</taxon>
        <taxon>Bacilli</taxon>
        <taxon>Bacillales</taxon>
        <taxon>Staphylococcaceae</taxon>
        <taxon>Staphylococcus</taxon>
    </lineage>
</organism>
<protein>
    <recommendedName>
        <fullName evidence="1">ATP synthase subunit c</fullName>
    </recommendedName>
    <alternativeName>
        <fullName evidence="1">ATP synthase F(0) sector subunit c</fullName>
    </alternativeName>
    <alternativeName>
        <fullName evidence="1">F-type ATPase subunit c</fullName>
        <shortName evidence="1">F-ATPase subunit c</shortName>
    </alternativeName>
    <alternativeName>
        <fullName evidence="1">Lipid-binding protein</fullName>
    </alternativeName>
</protein>
<dbReference type="EMBL" id="CP000253">
    <property type="protein sequence ID" value="ABD31380.1"/>
    <property type="molecule type" value="Genomic_DNA"/>
</dbReference>
<dbReference type="RefSeq" id="WP_001048816.1">
    <property type="nucleotide sequence ID" value="NZ_LS483365.1"/>
</dbReference>
<dbReference type="RefSeq" id="YP_500825.1">
    <property type="nucleotide sequence ID" value="NC_007795.1"/>
</dbReference>
<dbReference type="SMR" id="Q2G2F6"/>
<dbReference type="STRING" id="93061.SAOUHSC_02349"/>
<dbReference type="PaxDb" id="1280-SAXN108_2353"/>
<dbReference type="GeneID" id="3919392"/>
<dbReference type="GeneID" id="98346415"/>
<dbReference type="KEGG" id="sao:SAOUHSC_02349"/>
<dbReference type="PATRIC" id="fig|93061.5.peg.2126"/>
<dbReference type="eggNOG" id="COG0636">
    <property type="taxonomic scope" value="Bacteria"/>
</dbReference>
<dbReference type="HOGENOM" id="CLU_148047_1_1_9"/>
<dbReference type="OrthoDB" id="2357540at2"/>
<dbReference type="PRO" id="PR:Q2G2F6"/>
<dbReference type="Proteomes" id="UP000008816">
    <property type="component" value="Chromosome"/>
</dbReference>
<dbReference type="GO" id="GO:0005886">
    <property type="term" value="C:plasma membrane"/>
    <property type="evidence" value="ECO:0007669"/>
    <property type="project" value="UniProtKB-SubCell"/>
</dbReference>
<dbReference type="GO" id="GO:0045259">
    <property type="term" value="C:proton-transporting ATP synthase complex"/>
    <property type="evidence" value="ECO:0007669"/>
    <property type="project" value="UniProtKB-KW"/>
</dbReference>
<dbReference type="GO" id="GO:0033177">
    <property type="term" value="C:proton-transporting two-sector ATPase complex, proton-transporting domain"/>
    <property type="evidence" value="ECO:0007669"/>
    <property type="project" value="InterPro"/>
</dbReference>
<dbReference type="GO" id="GO:0008289">
    <property type="term" value="F:lipid binding"/>
    <property type="evidence" value="ECO:0007669"/>
    <property type="project" value="UniProtKB-KW"/>
</dbReference>
<dbReference type="GO" id="GO:0046933">
    <property type="term" value="F:proton-transporting ATP synthase activity, rotational mechanism"/>
    <property type="evidence" value="ECO:0007669"/>
    <property type="project" value="UniProtKB-UniRule"/>
</dbReference>
<dbReference type="GO" id="GO:0015986">
    <property type="term" value="P:proton motive force-driven ATP synthesis"/>
    <property type="evidence" value="ECO:0000318"/>
    <property type="project" value="GO_Central"/>
</dbReference>
<dbReference type="CDD" id="cd18185">
    <property type="entry name" value="ATP-synt_Fo_c_ATPE"/>
    <property type="match status" value="1"/>
</dbReference>
<dbReference type="FunFam" id="1.20.20.10:FF:000004">
    <property type="entry name" value="ATP synthase subunit c"/>
    <property type="match status" value="1"/>
</dbReference>
<dbReference type="Gene3D" id="1.20.20.10">
    <property type="entry name" value="F1F0 ATP synthase subunit C"/>
    <property type="match status" value="1"/>
</dbReference>
<dbReference type="HAMAP" id="MF_01396">
    <property type="entry name" value="ATP_synth_c_bact"/>
    <property type="match status" value="1"/>
</dbReference>
<dbReference type="InterPro" id="IPR005953">
    <property type="entry name" value="ATP_synth_csu_bac/chlpt"/>
</dbReference>
<dbReference type="InterPro" id="IPR000454">
    <property type="entry name" value="ATP_synth_F0_csu"/>
</dbReference>
<dbReference type="InterPro" id="IPR020537">
    <property type="entry name" value="ATP_synth_F0_csu_DDCD_BS"/>
</dbReference>
<dbReference type="InterPro" id="IPR038662">
    <property type="entry name" value="ATP_synth_F0_csu_sf"/>
</dbReference>
<dbReference type="InterPro" id="IPR002379">
    <property type="entry name" value="ATPase_proteolipid_c-like_dom"/>
</dbReference>
<dbReference type="InterPro" id="IPR035921">
    <property type="entry name" value="F/V-ATP_Csub_sf"/>
</dbReference>
<dbReference type="NCBIfam" id="TIGR01260">
    <property type="entry name" value="ATP_synt_c"/>
    <property type="match status" value="1"/>
</dbReference>
<dbReference type="NCBIfam" id="NF005363">
    <property type="entry name" value="PRK06876.1"/>
    <property type="match status" value="1"/>
</dbReference>
<dbReference type="Pfam" id="PF00137">
    <property type="entry name" value="ATP-synt_C"/>
    <property type="match status" value="1"/>
</dbReference>
<dbReference type="PRINTS" id="PR00124">
    <property type="entry name" value="ATPASEC"/>
</dbReference>
<dbReference type="SUPFAM" id="SSF81333">
    <property type="entry name" value="F1F0 ATP synthase subunit C"/>
    <property type="match status" value="1"/>
</dbReference>
<dbReference type="PROSITE" id="PS00605">
    <property type="entry name" value="ATPASE_C"/>
    <property type="match status" value="1"/>
</dbReference>
<keyword id="KW-0066">ATP synthesis</keyword>
<keyword id="KW-1003">Cell membrane</keyword>
<keyword id="KW-0138">CF(0)</keyword>
<keyword id="KW-0375">Hydrogen ion transport</keyword>
<keyword id="KW-0406">Ion transport</keyword>
<keyword id="KW-0446">Lipid-binding</keyword>
<keyword id="KW-0472">Membrane</keyword>
<keyword id="KW-1185">Reference proteome</keyword>
<keyword id="KW-0812">Transmembrane</keyword>
<keyword id="KW-1133">Transmembrane helix</keyword>
<keyword id="KW-0813">Transport</keyword>
<comment type="function">
    <text evidence="1">F(1)F(0) ATP synthase produces ATP from ADP in the presence of a proton or sodium gradient. F-type ATPases consist of two structural domains, F(1) containing the extramembraneous catalytic core and F(0) containing the membrane proton channel, linked together by a central stalk and a peripheral stalk. During catalysis, ATP synthesis in the catalytic domain of F(1) is coupled via a rotary mechanism of the central stalk subunits to proton translocation.</text>
</comment>
<comment type="function">
    <text evidence="1">Key component of the F(0) channel; it plays a direct role in translocation across the membrane. A homomeric c-ring of between 10-14 subunits forms the central stalk rotor element with the F(1) delta and epsilon subunits.</text>
</comment>
<comment type="subunit">
    <text evidence="1">F-type ATPases have 2 components, F(1) - the catalytic core - and F(0) - the membrane proton channel. F(1) has five subunits: alpha(3), beta(3), gamma(1), delta(1), epsilon(1). F(0) has three main subunits: a(1), b(2) and c(10-14). The alpha and beta chains form an alternating ring which encloses part of the gamma chain. F(1) is attached to F(0) by a central stalk formed by the gamma and epsilon chains, while a peripheral stalk is formed by the delta and b chains.</text>
</comment>
<comment type="subcellular location">
    <subcellularLocation>
        <location evidence="1">Cell membrane</location>
        <topology evidence="1">Multi-pass membrane protein</topology>
    </subcellularLocation>
</comment>
<comment type="similarity">
    <text evidence="1">Belongs to the ATPase C chain family.</text>
</comment>
<feature type="chain" id="PRO_1000184496" description="ATP synthase subunit c">
    <location>
        <begin position="1"/>
        <end position="70"/>
    </location>
</feature>
<feature type="transmembrane region" description="Helical" evidence="1">
    <location>
        <begin position="4"/>
        <end position="24"/>
    </location>
</feature>
<feature type="transmembrane region" description="Helical" evidence="1">
    <location>
        <begin position="45"/>
        <end position="65"/>
    </location>
</feature>
<feature type="site" description="Reversibly protonated during proton transport" evidence="1">
    <location>
        <position position="54"/>
    </location>
</feature>
<sequence>MNLIAAAIAIGLSALGAGIGNGLIVSRTVEGVARQPEARGQLMGIMFIGVGLVEALPIIGVVIAFMTFAG</sequence>